<gene>
    <name evidence="1" type="primary">rplN</name>
    <name type="ordered locus">PD_0447</name>
</gene>
<sequence>MIQMQSYLGVADNSGAKEVMCIKVLGGSKRRYASIGDVIKVTVKEAIPRGKVKKGEVYDAVVVRTRSGVRRPDGSLIRFDGNAAVLLNNKQEPIGTRVFGPVTRELRSEKLMKIVSLAPEVL</sequence>
<proteinExistence type="inferred from homology"/>
<protein>
    <recommendedName>
        <fullName evidence="1">Large ribosomal subunit protein uL14</fullName>
    </recommendedName>
    <alternativeName>
        <fullName evidence="2">50S ribosomal protein L14</fullName>
    </alternativeName>
</protein>
<organism>
    <name type="scientific">Xylella fastidiosa (strain Temecula1 / ATCC 700964)</name>
    <dbReference type="NCBI Taxonomy" id="183190"/>
    <lineage>
        <taxon>Bacteria</taxon>
        <taxon>Pseudomonadati</taxon>
        <taxon>Pseudomonadota</taxon>
        <taxon>Gammaproteobacteria</taxon>
        <taxon>Lysobacterales</taxon>
        <taxon>Lysobacteraceae</taxon>
        <taxon>Xylella</taxon>
    </lineage>
</organism>
<comment type="function">
    <text evidence="1">Binds to 23S rRNA. Forms part of two intersubunit bridges in the 70S ribosome.</text>
</comment>
<comment type="subunit">
    <text evidence="1">Part of the 50S ribosomal subunit. Forms a cluster with proteins L3 and L19. In the 70S ribosome, L14 and L19 interact and together make contacts with the 16S rRNA in bridges B5 and B8.</text>
</comment>
<comment type="similarity">
    <text evidence="1">Belongs to the universal ribosomal protein uL14 family.</text>
</comment>
<name>RL14_XYLFT</name>
<evidence type="ECO:0000255" key="1">
    <source>
        <dbReference type="HAMAP-Rule" id="MF_01367"/>
    </source>
</evidence>
<evidence type="ECO:0000305" key="2"/>
<dbReference type="EMBL" id="AE009442">
    <property type="protein sequence ID" value="AAO28326.1"/>
    <property type="molecule type" value="Genomic_DNA"/>
</dbReference>
<dbReference type="RefSeq" id="WP_004090111.1">
    <property type="nucleotide sequence ID" value="NC_004556.1"/>
</dbReference>
<dbReference type="SMR" id="Q87E72"/>
<dbReference type="GeneID" id="93904149"/>
<dbReference type="KEGG" id="xft:PD_0447"/>
<dbReference type="HOGENOM" id="CLU_095071_2_1_6"/>
<dbReference type="Proteomes" id="UP000002516">
    <property type="component" value="Chromosome"/>
</dbReference>
<dbReference type="GO" id="GO:0022625">
    <property type="term" value="C:cytosolic large ribosomal subunit"/>
    <property type="evidence" value="ECO:0007669"/>
    <property type="project" value="TreeGrafter"/>
</dbReference>
<dbReference type="GO" id="GO:0070180">
    <property type="term" value="F:large ribosomal subunit rRNA binding"/>
    <property type="evidence" value="ECO:0007669"/>
    <property type="project" value="TreeGrafter"/>
</dbReference>
<dbReference type="GO" id="GO:0003735">
    <property type="term" value="F:structural constituent of ribosome"/>
    <property type="evidence" value="ECO:0007669"/>
    <property type="project" value="InterPro"/>
</dbReference>
<dbReference type="GO" id="GO:0006412">
    <property type="term" value="P:translation"/>
    <property type="evidence" value="ECO:0007669"/>
    <property type="project" value="UniProtKB-UniRule"/>
</dbReference>
<dbReference type="CDD" id="cd00337">
    <property type="entry name" value="Ribosomal_uL14"/>
    <property type="match status" value="1"/>
</dbReference>
<dbReference type="FunFam" id="2.40.150.20:FF:000001">
    <property type="entry name" value="50S ribosomal protein L14"/>
    <property type="match status" value="1"/>
</dbReference>
<dbReference type="Gene3D" id="2.40.150.20">
    <property type="entry name" value="Ribosomal protein L14"/>
    <property type="match status" value="1"/>
</dbReference>
<dbReference type="HAMAP" id="MF_01367">
    <property type="entry name" value="Ribosomal_uL14"/>
    <property type="match status" value="1"/>
</dbReference>
<dbReference type="InterPro" id="IPR000218">
    <property type="entry name" value="Ribosomal_uL14"/>
</dbReference>
<dbReference type="InterPro" id="IPR005745">
    <property type="entry name" value="Ribosomal_uL14_bac-type"/>
</dbReference>
<dbReference type="InterPro" id="IPR019972">
    <property type="entry name" value="Ribosomal_uL14_CS"/>
</dbReference>
<dbReference type="InterPro" id="IPR036853">
    <property type="entry name" value="Ribosomal_uL14_sf"/>
</dbReference>
<dbReference type="NCBIfam" id="TIGR01067">
    <property type="entry name" value="rplN_bact"/>
    <property type="match status" value="1"/>
</dbReference>
<dbReference type="PANTHER" id="PTHR11761">
    <property type="entry name" value="50S/60S RIBOSOMAL PROTEIN L14/L23"/>
    <property type="match status" value="1"/>
</dbReference>
<dbReference type="PANTHER" id="PTHR11761:SF3">
    <property type="entry name" value="LARGE RIBOSOMAL SUBUNIT PROTEIN UL14M"/>
    <property type="match status" value="1"/>
</dbReference>
<dbReference type="Pfam" id="PF00238">
    <property type="entry name" value="Ribosomal_L14"/>
    <property type="match status" value="1"/>
</dbReference>
<dbReference type="SMART" id="SM01374">
    <property type="entry name" value="Ribosomal_L14"/>
    <property type="match status" value="1"/>
</dbReference>
<dbReference type="SUPFAM" id="SSF50193">
    <property type="entry name" value="Ribosomal protein L14"/>
    <property type="match status" value="1"/>
</dbReference>
<dbReference type="PROSITE" id="PS00049">
    <property type="entry name" value="RIBOSOMAL_L14"/>
    <property type="match status" value="1"/>
</dbReference>
<feature type="chain" id="PRO_0000266590" description="Large ribosomal subunit protein uL14">
    <location>
        <begin position="1"/>
        <end position="122"/>
    </location>
</feature>
<accession>Q87E72</accession>
<keyword id="KW-1185">Reference proteome</keyword>
<keyword id="KW-0687">Ribonucleoprotein</keyword>
<keyword id="KW-0689">Ribosomal protein</keyword>
<keyword id="KW-0694">RNA-binding</keyword>
<keyword id="KW-0699">rRNA-binding</keyword>
<reference key="1">
    <citation type="journal article" date="2003" name="J. Bacteriol.">
        <title>Comparative analyses of the complete genome sequences of Pierce's disease and citrus variegated chlorosis strains of Xylella fastidiosa.</title>
        <authorList>
            <person name="Van Sluys M.A."/>
            <person name="de Oliveira M.C."/>
            <person name="Monteiro-Vitorello C.B."/>
            <person name="Miyaki C.Y."/>
            <person name="Furlan L.R."/>
            <person name="Camargo L.E.A."/>
            <person name="da Silva A.C.R."/>
            <person name="Moon D.H."/>
            <person name="Takita M.A."/>
            <person name="Lemos E.G.M."/>
            <person name="Machado M.A."/>
            <person name="Ferro M.I.T."/>
            <person name="da Silva F.R."/>
            <person name="Goldman M.H.S."/>
            <person name="Goldman G.H."/>
            <person name="Lemos M.V.F."/>
            <person name="El-Dorry H."/>
            <person name="Tsai S.M."/>
            <person name="Carrer H."/>
            <person name="Carraro D.M."/>
            <person name="de Oliveira R.C."/>
            <person name="Nunes L.R."/>
            <person name="Siqueira W.J."/>
            <person name="Coutinho L.L."/>
            <person name="Kimura E.T."/>
            <person name="Ferro E.S."/>
            <person name="Harakava R."/>
            <person name="Kuramae E.E."/>
            <person name="Marino C.L."/>
            <person name="Giglioti E."/>
            <person name="Abreu I.L."/>
            <person name="Alves L.M.C."/>
            <person name="do Amaral A.M."/>
            <person name="Baia G.S."/>
            <person name="Blanco S.R."/>
            <person name="Brito M.S."/>
            <person name="Cannavan F.S."/>
            <person name="Celestino A.V."/>
            <person name="da Cunha A.F."/>
            <person name="Fenille R.C."/>
            <person name="Ferro J.A."/>
            <person name="Formighieri E.F."/>
            <person name="Kishi L.T."/>
            <person name="Leoni S.G."/>
            <person name="Oliveira A.R."/>
            <person name="Rosa V.E. Jr."/>
            <person name="Sassaki F.T."/>
            <person name="Sena J.A.D."/>
            <person name="de Souza A.A."/>
            <person name="Truffi D."/>
            <person name="Tsukumo F."/>
            <person name="Yanai G.M."/>
            <person name="Zaros L.G."/>
            <person name="Civerolo E.L."/>
            <person name="Simpson A.J.G."/>
            <person name="Almeida N.F. Jr."/>
            <person name="Setubal J.C."/>
            <person name="Kitajima J.P."/>
        </authorList>
    </citation>
    <scope>NUCLEOTIDE SEQUENCE [LARGE SCALE GENOMIC DNA]</scope>
    <source>
        <strain>Temecula1 / ATCC 700964</strain>
    </source>
</reference>